<organism>
    <name type="scientific">Campylobacter fetus subsp. fetus (strain 82-40)</name>
    <dbReference type="NCBI Taxonomy" id="360106"/>
    <lineage>
        <taxon>Bacteria</taxon>
        <taxon>Pseudomonadati</taxon>
        <taxon>Campylobacterota</taxon>
        <taxon>Epsilonproteobacteria</taxon>
        <taxon>Campylobacterales</taxon>
        <taxon>Campylobacteraceae</taxon>
        <taxon>Campylobacter</taxon>
    </lineage>
</organism>
<reference key="1">
    <citation type="submission" date="2006-11" db="EMBL/GenBank/DDBJ databases">
        <title>Sequence of Campylobacter fetus subsp. fetus 82-40.</title>
        <authorList>
            <person name="Fouts D.E."/>
            <person name="Nelson K.E."/>
        </authorList>
    </citation>
    <scope>NUCLEOTIDE SEQUENCE [LARGE SCALE GENOMIC DNA]</scope>
    <source>
        <strain>82-40</strain>
    </source>
</reference>
<comment type="function">
    <text evidence="1">One of two assembly initiator proteins, it binds directly to the 5'-end of the 23S rRNA, where it nucleates assembly of the 50S subunit.</text>
</comment>
<comment type="function">
    <text evidence="1">One of the proteins that surrounds the polypeptide exit tunnel on the outside of the subunit.</text>
</comment>
<comment type="subunit">
    <text evidence="1">Part of the 50S ribosomal subunit.</text>
</comment>
<comment type="similarity">
    <text evidence="1">Belongs to the universal ribosomal protein uL24 family.</text>
</comment>
<gene>
    <name evidence="1" type="primary">rplX</name>
    <name type="ordered locus">CFF8240_0045</name>
</gene>
<proteinExistence type="inferred from homology"/>
<name>RL24_CAMFF</name>
<feature type="chain" id="PRO_1000052200" description="Large ribosomal subunit protein uL24">
    <location>
        <begin position="1"/>
        <end position="77"/>
    </location>
</feature>
<dbReference type="EMBL" id="CP000487">
    <property type="protein sequence ID" value="ABK83333.1"/>
    <property type="molecule type" value="Genomic_DNA"/>
</dbReference>
<dbReference type="RefSeq" id="WP_002847984.1">
    <property type="nucleotide sequence ID" value="NC_008599.1"/>
</dbReference>
<dbReference type="SMR" id="A0RM22"/>
<dbReference type="GeneID" id="61063888"/>
<dbReference type="KEGG" id="cff:CFF8240_0045"/>
<dbReference type="eggNOG" id="COG0198">
    <property type="taxonomic scope" value="Bacteria"/>
</dbReference>
<dbReference type="HOGENOM" id="CLU_093315_3_0_7"/>
<dbReference type="Proteomes" id="UP000000760">
    <property type="component" value="Chromosome"/>
</dbReference>
<dbReference type="GO" id="GO:1990904">
    <property type="term" value="C:ribonucleoprotein complex"/>
    <property type="evidence" value="ECO:0007669"/>
    <property type="project" value="UniProtKB-KW"/>
</dbReference>
<dbReference type="GO" id="GO:0005840">
    <property type="term" value="C:ribosome"/>
    <property type="evidence" value="ECO:0007669"/>
    <property type="project" value="UniProtKB-KW"/>
</dbReference>
<dbReference type="GO" id="GO:0019843">
    <property type="term" value="F:rRNA binding"/>
    <property type="evidence" value="ECO:0007669"/>
    <property type="project" value="UniProtKB-UniRule"/>
</dbReference>
<dbReference type="GO" id="GO:0003735">
    <property type="term" value="F:structural constituent of ribosome"/>
    <property type="evidence" value="ECO:0007669"/>
    <property type="project" value="InterPro"/>
</dbReference>
<dbReference type="GO" id="GO:0006412">
    <property type="term" value="P:translation"/>
    <property type="evidence" value="ECO:0007669"/>
    <property type="project" value="UniProtKB-UniRule"/>
</dbReference>
<dbReference type="CDD" id="cd06089">
    <property type="entry name" value="KOW_RPL26"/>
    <property type="match status" value="1"/>
</dbReference>
<dbReference type="Gene3D" id="2.30.30.30">
    <property type="match status" value="1"/>
</dbReference>
<dbReference type="HAMAP" id="MF_01326_B">
    <property type="entry name" value="Ribosomal_uL24_B"/>
    <property type="match status" value="1"/>
</dbReference>
<dbReference type="InterPro" id="IPR005824">
    <property type="entry name" value="KOW"/>
</dbReference>
<dbReference type="InterPro" id="IPR014722">
    <property type="entry name" value="Rib_uL2_dom2"/>
</dbReference>
<dbReference type="InterPro" id="IPR003256">
    <property type="entry name" value="Ribosomal_uL24"/>
</dbReference>
<dbReference type="InterPro" id="IPR005825">
    <property type="entry name" value="Ribosomal_uL24_CS"/>
</dbReference>
<dbReference type="InterPro" id="IPR041988">
    <property type="entry name" value="Ribosomal_uL24_KOW"/>
</dbReference>
<dbReference type="InterPro" id="IPR008991">
    <property type="entry name" value="Translation_prot_SH3-like_sf"/>
</dbReference>
<dbReference type="NCBIfam" id="TIGR01079">
    <property type="entry name" value="rplX_bact"/>
    <property type="match status" value="1"/>
</dbReference>
<dbReference type="PANTHER" id="PTHR12903">
    <property type="entry name" value="MITOCHONDRIAL RIBOSOMAL PROTEIN L24"/>
    <property type="match status" value="1"/>
</dbReference>
<dbReference type="Pfam" id="PF00467">
    <property type="entry name" value="KOW"/>
    <property type="match status" value="1"/>
</dbReference>
<dbReference type="Pfam" id="PF17136">
    <property type="entry name" value="ribosomal_L24"/>
    <property type="match status" value="1"/>
</dbReference>
<dbReference type="SMART" id="SM00739">
    <property type="entry name" value="KOW"/>
    <property type="match status" value="1"/>
</dbReference>
<dbReference type="SUPFAM" id="SSF50104">
    <property type="entry name" value="Translation proteins SH3-like domain"/>
    <property type="match status" value="1"/>
</dbReference>
<dbReference type="PROSITE" id="PS01108">
    <property type="entry name" value="RIBOSOMAL_L24"/>
    <property type="match status" value="1"/>
</dbReference>
<accession>A0RM22</accession>
<protein>
    <recommendedName>
        <fullName evidence="1">Large ribosomal subunit protein uL24</fullName>
    </recommendedName>
    <alternativeName>
        <fullName evidence="2">50S ribosomal protein L24</fullName>
    </alternativeName>
</protein>
<keyword id="KW-0687">Ribonucleoprotein</keyword>
<keyword id="KW-0689">Ribosomal protein</keyword>
<keyword id="KW-0694">RNA-binding</keyword>
<keyword id="KW-0699">rRNA-binding</keyword>
<evidence type="ECO:0000255" key="1">
    <source>
        <dbReference type="HAMAP-Rule" id="MF_01326"/>
    </source>
</evidence>
<evidence type="ECO:0000305" key="2"/>
<sequence>MAVKYKIKKGDEVKVIAGDDKGKVAKVIAVLPKKGQVIVEGVKVAKKAVKPTEKNPNGGFISKEMPIDISNVAKVEG</sequence>